<evidence type="ECO:0000250" key="1">
    <source>
        <dbReference type="UniProtKB" id="P55899"/>
    </source>
</evidence>
<evidence type="ECO:0000255" key="2"/>
<evidence type="ECO:0000255" key="3">
    <source>
        <dbReference type="PROSITE-ProRule" id="PRU00114"/>
    </source>
</evidence>
<evidence type="ECO:0000256" key="4">
    <source>
        <dbReference type="SAM" id="MobiDB-lite"/>
    </source>
</evidence>
<evidence type="ECO:0000269" key="5">
    <source>
    </source>
</evidence>
<evidence type="ECO:0000269" key="6">
    <source>
    </source>
</evidence>
<evidence type="ECO:0000269" key="7">
    <source>
    </source>
</evidence>
<evidence type="ECO:0000269" key="8">
    <source>
    </source>
</evidence>
<evidence type="ECO:0000269" key="9">
    <source>
    </source>
</evidence>
<evidence type="ECO:0000303" key="10">
    <source>
    </source>
</evidence>
<evidence type="ECO:0000305" key="11"/>
<evidence type="ECO:0007744" key="12">
    <source>
        <dbReference type="PDB" id="1FRT"/>
    </source>
</evidence>
<evidence type="ECO:0007744" key="13">
    <source>
        <dbReference type="PDB" id="3FRU"/>
    </source>
</evidence>
<evidence type="ECO:0007829" key="14">
    <source>
        <dbReference type="PDB" id="1I1A"/>
    </source>
</evidence>
<evidence type="ECO:0007829" key="15">
    <source>
        <dbReference type="PDB" id="3FRU"/>
    </source>
</evidence>
<feature type="signal peptide" evidence="6">
    <location>
        <begin position="1"/>
        <end position="22"/>
    </location>
</feature>
<feature type="chain" id="PRO_0000015160" description="IgG receptor FcRn large subunit p51" evidence="6">
    <location>
        <begin position="23"/>
        <end position="366"/>
    </location>
</feature>
<feature type="topological domain" description="Extracellular" evidence="2">
    <location>
        <begin position="23"/>
        <end position="298"/>
    </location>
</feature>
<feature type="transmembrane region" description="Helical" evidence="2">
    <location>
        <begin position="299"/>
        <end position="322"/>
    </location>
</feature>
<feature type="topological domain" description="Cytoplasmic" evidence="2">
    <location>
        <begin position="323"/>
        <end position="366"/>
    </location>
</feature>
<feature type="domain" description="Ig-like C1-type" evidence="3">
    <location>
        <begin position="203"/>
        <end position="290"/>
    </location>
</feature>
<feature type="region of interest" description="Alpha-1" evidence="8 9 12 13">
    <location>
        <begin position="23"/>
        <end position="111"/>
    </location>
</feature>
<feature type="region of interest" description="Alpha-2" evidence="8 9 12 13">
    <location>
        <begin position="112"/>
        <end position="201"/>
    </location>
</feature>
<feature type="region of interest" description="Alpha-3" evidence="8 9 12 13">
    <location>
        <begin position="202"/>
        <end position="291"/>
    </location>
</feature>
<feature type="region of interest" description="Connecting peptide">
    <location>
        <begin position="293"/>
        <end position="298"/>
    </location>
</feature>
<feature type="region of interest" description="Disordered" evidence="4">
    <location>
        <begin position="344"/>
        <end position="366"/>
    </location>
</feature>
<feature type="modified residue" description="Phosphoserine" evidence="1">
    <location>
        <position position="335"/>
    </location>
</feature>
<feature type="glycosylation site" description="N-linked (GlcNAc...) asparagine" evidence="2">
    <location>
        <position position="109"/>
    </location>
</feature>
<feature type="glycosylation site" description="N-linked (GlcNAc...) asparagine" evidence="2">
    <location>
        <position position="126"/>
    </location>
</feature>
<feature type="glycosylation site" description="N-linked (GlcNAc...) asparagine" evidence="2">
    <location>
        <position position="150"/>
    </location>
</feature>
<feature type="glycosylation site" description="N-linked (GlcNAc...) asparagine" evidence="2">
    <location>
        <position position="247"/>
    </location>
</feature>
<feature type="disulfide bond" evidence="3">
    <location>
        <begin position="120"/>
        <end position="183"/>
    </location>
</feature>
<feature type="disulfide bond" evidence="3">
    <location>
        <begin position="222"/>
        <end position="276"/>
    </location>
</feature>
<feature type="strand" evidence="15">
    <location>
        <begin position="29"/>
        <end position="37"/>
    </location>
</feature>
<feature type="strand" evidence="15">
    <location>
        <begin position="45"/>
        <end position="52"/>
    </location>
</feature>
<feature type="strand" evidence="15">
    <location>
        <begin position="55"/>
        <end position="61"/>
    </location>
</feature>
<feature type="turn" evidence="15">
    <location>
        <begin position="62"/>
        <end position="64"/>
    </location>
</feature>
<feature type="helix" evidence="15">
    <location>
        <begin position="71"/>
        <end position="75"/>
    </location>
</feature>
<feature type="helix" evidence="15">
    <location>
        <begin position="82"/>
        <end position="107"/>
    </location>
</feature>
<feature type="strand" evidence="14">
    <location>
        <begin position="108"/>
        <end position="110"/>
    </location>
</feature>
<feature type="strand" evidence="15">
    <location>
        <begin position="113"/>
        <end position="122"/>
    </location>
</feature>
<feature type="strand" evidence="15">
    <location>
        <begin position="128"/>
        <end position="136"/>
    </location>
</feature>
<feature type="strand" evidence="15">
    <location>
        <begin position="139"/>
        <end position="144"/>
    </location>
</feature>
<feature type="turn" evidence="15">
    <location>
        <begin position="146"/>
        <end position="148"/>
    </location>
</feature>
<feature type="strand" evidence="14">
    <location>
        <begin position="150"/>
        <end position="152"/>
    </location>
</feature>
<feature type="helix" evidence="15">
    <location>
        <begin position="156"/>
        <end position="165"/>
    </location>
</feature>
<feature type="helix" evidence="15">
    <location>
        <begin position="169"/>
        <end position="180"/>
    </location>
</feature>
<feature type="helix" evidence="15">
    <location>
        <begin position="182"/>
        <end position="193"/>
    </location>
</feature>
<feature type="helix" evidence="15">
    <location>
        <begin position="195"/>
        <end position="198"/>
    </location>
</feature>
<feature type="strand" evidence="15">
    <location>
        <begin position="205"/>
        <end position="212"/>
    </location>
</feature>
<feature type="strand" evidence="15">
    <location>
        <begin position="217"/>
        <end position="230"/>
    </location>
</feature>
<feature type="strand" evidence="15">
    <location>
        <begin position="233"/>
        <end position="238"/>
    </location>
</feature>
<feature type="strand" evidence="15">
    <location>
        <begin position="247"/>
        <end position="252"/>
    </location>
</feature>
<feature type="strand" evidence="15">
    <location>
        <begin position="254"/>
        <end position="256"/>
    </location>
</feature>
<feature type="strand" evidence="15">
    <location>
        <begin position="258"/>
        <end position="267"/>
    </location>
</feature>
<feature type="helix" evidence="15">
    <location>
        <begin position="271"/>
        <end position="273"/>
    </location>
</feature>
<feature type="strand" evidence="15">
    <location>
        <begin position="274"/>
        <end position="279"/>
    </location>
</feature>
<feature type="strand" evidence="15">
    <location>
        <begin position="283"/>
        <end position="285"/>
    </location>
</feature>
<feature type="strand" evidence="15">
    <location>
        <begin position="287"/>
        <end position="289"/>
    </location>
</feature>
<reference key="1">
    <citation type="journal article" date="1989" name="Nature">
        <title>An Fc receptor structurally related to MHC class I antigens.</title>
        <authorList>
            <person name="Simister N.E."/>
            <person name="Mostov K.E."/>
        </authorList>
    </citation>
    <scope>NUCLEOTIDE SEQUENCE [MRNA]</scope>
    <scope>PROTEIN SEQUENCE OF 23-39; 176-185 AND 282-291</scope>
    <scope>SUBUNIT</scope>
    <scope>SUBCELLULAR LOCATION</scope>
    <scope>TISSUE SPECIFICITY</scope>
    <source>
        <strain>Wistar</strain>
        <tissue evidence="10">Epithelium</tissue>
    </source>
</reference>
<reference key="2">
    <citation type="journal article" date="1989" name="Cold Spring Harb. Symp. Quant. Biol.">
        <title>Cloning and expression of the neonatal rat intestinal Fc receptor, a major histocompatibility complex class I antigen homolog.</title>
        <authorList>
            <person name="Simister N.E."/>
            <person name="Mostov K.E."/>
        </authorList>
    </citation>
    <scope>NUCLEOTIDE SEQUENCE [MRNA]</scope>
    <source>
        <tissue>Epithelium</tissue>
    </source>
</reference>
<reference key="3">
    <citation type="journal article" date="2004" name="Genome Res.">
        <title>The status, quality, and expansion of the NIH full-length cDNA project: the Mammalian Gene Collection (MGC).</title>
        <authorList>
            <consortium name="The MGC Project Team"/>
        </authorList>
    </citation>
    <scope>NUCLEOTIDE SEQUENCE [LARGE SCALE MRNA]</scope>
    <source>
        <tissue>Prostate</tissue>
    </source>
</reference>
<reference key="4">
    <citation type="journal article" date="1981" name="J. Cell Biol.">
        <title>Evidence for the sorting of endocytic vesicle contents during the receptor-mediated transport of IgG across the newborn rat intestine.</title>
        <authorList>
            <person name="Abrahamson D.R."/>
            <person name="Rodewald R."/>
        </authorList>
    </citation>
    <scope>FUNCTION</scope>
</reference>
<reference key="5">
    <citation type="journal article" date="2008" name="Nature">
        <title>FcRn-mediated antibody transport across epithelial cells revealed by electron tomography.</title>
        <authorList>
            <person name="He W."/>
            <person name="Ladinsky M.S."/>
            <person name="Huey-Tubman K.E."/>
            <person name="Jensen G.J."/>
            <person name="McIntosh J.R."/>
            <person name="Bjoerkman P.J."/>
        </authorList>
    </citation>
    <scope>FUNCTION</scope>
</reference>
<reference evidence="12" key="6">
    <citation type="journal article" date="1994" name="Nature">
        <title>Crystal structure of the complex of rat neonatal Fc receptor with Fc.</title>
        <authorList>
            <person name="Burmeister W.P."/>
            <person name="Huber A.H."/>
            <person name="Bjorkman P.J."/>
        </authorList>
    </citation>
    <scope>X-RAY CRYSTALLOGRAPHY (2.2 ANGSTROMS) OF 23-291 IN COMPLEX WITH FC AND BETA-2-MICROGLOBULIN</scope>
    <scope>FUNCTION</scope>
    <scope>SUBUNIT</scope>
</reference>
<reference evidence="13" key="7">
    <citation type="journal article" date="1998" name="Structure">
        <title>Structural basis of pH-dependent antibody binding by the neonatal Fc receptor.</title>
        <authorList>
            <person name="Vaughn D.E."/>
            <person name="Bjorkman P.J."/>
        </authorList>
    </citation>
    <scope>X-RAY CRYSTALLOGRAPHY (2.2 ANGSTROMS) OF 23-291 IN COMPLEX WITH BETA-2-MICROGLOBULIN</scope>
</reference>
<gene>
    <name type="primary">Fcgrt</name>
    <name type="synonym">Fcrn</name>
</gene>
<keyword id="KW-0002">3D-structure</keyword>
<keyword id="KW-1003">Cell membrane</keyword>
<keyword id="KW-0903">Direct protein sequencing</keyword>
<keyword id="KW-1015">Disulfide bond</keyword>
<keyword id="KW-0967">Endosome</keyword>
<keyword id="KW-0325">Glycoprotein</keyword>
<keyword id="KW-0390">IgG-binding protein</keyword>
<keyword id="KW-0393">Immunoglobulin domain</keyword>
<keyword id="KW-0472">Membrane</keyword>
<keyword id="KW-0597">Phosphoprotein</keyword>
<keyword id="KW-0675">Receptor</keyword>
<keyword id="KW-1185">Reference proteome</keyword>
<keyword id="KW-0732">Signal</keyword>
<keyword id="KW-0812">Transmembrane</keyword>
<keyword id="KW-1133">Transmembrane helix</keyword>
<organism>
    <name type="scientific">Rattus norvegicus</name>
    <name type="common">Rat</name>
    <dbReference type="NCBI Taxonomy" id="10116"/>
    <lineage>
        <taxon>Eukaryota</taxon>
        <taxon>Metazoa</taxon>
        <taxon>Chordata</taxon>
        <taxon>Craniata</taxon>
        <taxon>Vertebrata</taxon>
        <taxon>Euteleostomi</taxon>
        <taxon>Mammalia</taxon>
        <taxon>Eutheria</taxon>
        <taxon>Euarchontoglires</taxon>
        <taxon>Glires</taxon>
        <taxon>Rodentia</taxon>
        <taxon>Myomorpha</taxon>
        <taxon>Muroidea</taxon>
        <taxon>Muridae</taxon>
        <taxon>Murinae</taxon>
        <taxon>Rattus</taxon>
    </lineage>
</organism>
<name>FCGRN_RAT</name>
<protein>
    <recommendedName>
        <fullName>IgG receptor FcRn large subunit p51</fullName>
        <shortName>FcRn</shortName>
    </recommendedName>
    <alternativeName>
        <fullName>IgG Fc fragment receptor transporter alpha chain</fullName>
    </alternativeName>
    <alternativeName>
        <fullName>Neonatal Fc receptor</fullName>
    </alternativeName>
</protein>
<proteinExistence type="evidence at protein level"/>
<dbReference type="EMBL" id="X14323">
    <property type="protein sequence ID" value="CAA32503.1"/>
    <property type="molecule type" value="mRNA"/>
</dbReference>
<dbReference type="EMBL" id="M35495">
    <property type="protein sequence ID" value="AAA41611.1"/>
    <property type="molecule type" value="mRNA"/>
</dbReference>
<dbReference type="EMBL" id="BC061975">
    <property type="protein sequence ID" value="AAH61975.1"/>
    <property type="molecule type" value="mRNA"/>
</dbReference>
<dbReference type="PIR" id="A37374">
    <property type="entry name" value="A37374"/>
</dbReference>
<dbReference type="RefSeq" id="NP_203502.1">
    <property type="nucleotide sequence ID" value="NM_033351.2"/>
</dbReference>
<dbReference type="RefSeq" id="XP_006229105.1">
    <property type="nucleotide sequence ID" value="XM_006229043.4"/>
</dbReference>
<dbReference type="RefSeq" id="XP_008757565.1">
    <property type="nucleotide sequence ID" value="XM_008759343.2"/>
</dbReference>
<dbReference type="RefSeq" id="XP_038965493.1">
    <property type="nucleotide sequence ID" value="XM_039109565.2"/>
</dbReference>
<dbReference type="PDB" id="1FRT">
    <property type="method" value="X-ray"/>
    <property type="resolution" value="4.50 A"/>
    <property type="chains" value="A=23-291"/>
</dbReference>
<dbReference type="PDB" id="1I1A">
    <property type="method" value="X-ray"/>
    <property type="resolution" value="2.80 A"/>
    <property type="chains" value="A=23-291"/>
</dbReference>
<dbReference type="PDB" id="3FRU">
    <property type="method" value="X-ray"/>
    <property type="resolution" value="2.20 A"/>
    <property type="chains" value="A/C/E=23-291"/>
</dbReference>
<dbReference type="PDBsum" id="1FRT"/>
<dbReference type="PDBsum" id="1I1A"/>
<dbReference type="PDBsum" id="3FRU"/>
<dbReference type="SMR" id="P13599"/>
<dbReference type="FunCoup" id="P13599">
    <property type="interactions" value="175"/>
</dbReference>
<dbReference type="IntAct" id="P13599">
    <property type="interactions" value="1"/>
</dbReference>
<dbReference type="STRING" id="10116.ENSRNOP00000027944"/>
<dbReference type="GlyCosmos" id="P13599">
    <property type="glycosylation" value="4 sites, No reported glycans"/>
</dbReference>
<dbReference type="GlyGen" id="P13599">
    <property type="glycosylation" value="4 sites"/>
</dbReference>
<dbReference type="iPTMnet" id="P13599"/>
<dbReference type="PhosphoSitePlus" id="P13599"/>
<dbReference type="PaxDb" id="10116-ENSRNOP00000027944"/>
<dbReference type="GeneID" id="29558"/>
<dbReference type="KEGG" id="rno:29558"/>
<dbReference type="UCSC" id="RGD:61811">
    <property type="organism name" value="rat"/>
</dbReference>
<dbReference type="AGR" id="RGD:61811"/>
<dbReference type="CTD" id="2217"/>
<dbReference type="RGD" id="61811">
    <property type="gene designation" value="Fcgrt"/>
</dbReference>
<dbReference type="VEuPathDB" id="HostDB:ENSRNOG00000020583"/>
<dbReference type="eggNOG" id="ENOG502RTZ5">
    <property type="taxonomic scope" value="Eukaryota"/>
</dbReference>
<dbReference type="HOGENOM" id="CLU_047501_7_0_1"/>
<dbReference type="InParanoid" id="P13599"/>
<dbReference type="OrthoDB" id="8890485at2759"/>
<dbReference type="PhylomeDB" id="P13599"/>
<dbReference type="EvolutionaryTrace" id="P13599"/>
<dbReference type="PRO" id="PR:P13599"/>
<dbReference type="Proteomes" id="UP000002494">
    <property type="component" value="Chromosome 1"/>
</dbReference>
<dbReference type="Bgee" id="ENSRNOG00000020583">
    <property type="expression patterns" value="Expressed in spleen and 19 other cell types or tissues"/>
</dbReference>
<dbReference type="GO" id="GO:0010008">
    <property type="term" value="C:endosome membrane"/>
    <property type="evidence" value="ECO:0007669"/>
    <property type="project" value="UniProtKB-SubCell"/>
</dbReference>
<dbReference type="GO" id="GO:0009897">
    <property type="term" value="C:external side of plasma membrane"/>
    <property type="evidence" value="ECO:0000318"/>
    <property type="project" value="GO_Central"/>
</dbReference>
<dbReference type="GO" id="GO:0005615">
    <property type="term" value="C:extracellular space"/>
    <property type="evidence" value="ECO:0000318"/>
    <property type="project" value="GO_Central"/>
</dbReference>
<dbReference type="GO" id="GO:0030881">
    <property type="term" value="F:beta-2-microglobulin binding"/>
    <property type="evidence" value="ECO:0000314"/>
    <property type="project" value="RGD"/>
</dbReference>
<dbReference type="GO" id="GO:0019864">
    <property type="term" value="F:IgG binding"/>
    <property type="evidence" value="ECO:0000266"/>
    <property type="project" value="RGD"/>
</dbReference>
<dbReference type="GO" id="GO:0019770">
    <property type="term" value="F:IgG receptor activity"/>
    <property type="evidence" value="ECO:0000304"/>
    <property type="project" value="RGD"/>
</dbReference>
<dbReference type="GO" id="GO:0006959">
    <property type="term" value="P:humoral immune response"/>
    <property type="evidence" value="ECO:0000304"/>
    <property type="project" value="RGD"/>
</dbReference>
<dbReference type="GO" id="GO:0006955">
    <property type="term" value="P:immune response"/>
    <property type="evidence" value="ECO:0000318"/>
    <property type="project" value="GO_Central"/>
</dbReference>
<dbReference type="CDD" id="cd21011">
    <property type="entry name" value="IgC1_MHC-like_FcRn"/>
    <property type="match status" value="1"/>
</dbReference>
<dbReference type="FunFam" id="2.60.40.10:FF:000693">
    <property type="entry name" value="IgG receptor FcRn large subunit p51"/>
    <property type="match status" value="1"/>
</dbReference>
<dbReference type="FunFam" id="3.30.500.10:FF:000003">
    <property type="entry name" value="IgG receptor FcRn large subunit p51"/>
    <property type="match status" value="1"/>
</dbReference>
<dbReference type="Gene3D" id="2.60.40.10">
    <property type="entry name" value="Immunoglobulins"/>
    <property type="match status" value="1"/>
</dbReference>
<dbReference type="Gene3D" id="3.30.500.10">
    <property type="entry name" value="MHC class I-like antigen recognition-like"/>
    <property type="match status" value="1"/>
</dbReference>
<dbReference type="InterPro" id="IPR007110">
    <property type="entry name" value="Ig-like_dom"/>
</dbReference>
<dbReference type="InterPro" id="IPR036179">
    <property type="entry name" value="Ig-like_dom_sf"/>
</dbReference>
<dbReference type="InterPro" id="IPR013783">
    <property type="entry name" value="Ig-like_fold"/>
</dbReference>
<dbReference type="InterPro" id="IPR003006">
    <property type="entry name" value="Ig/MHC_CS"/>
</dbReference>
<dbReference type="InterPro" id="IPR003597">
    <property type="entry name" value="Ig_C1-set"/>
</dbReference>
<dbReference type="InterPro" id="IPR050208">
    <property type="entry name" value="MHC_class-I_related"/>
</dbReference>
<dbReference type="InterPro" id="IPR011161">
    <property type="entry name" value="MHC_I-like_Ag-recog"/>
</dbReference>
<dbReference type="InterPro" id="IPR037055">
    <property type="entry name" value="MHC_I-like_Ag-recog_sf"/>
</dbReference>
<dbReference type="InterPro" id="IPR011162">
    <property type="entry name" value="MHC_I/II-like_Ag-recog"/>
</dbReference>
<dbReference type="PANTHER" id="PTHR16675:SF3">
    <property type="entry name" value="IGG RECEPTOR FCRN LARGE SUBUNIT P51"/>
    <property type="match status" value="1"/>
</dbReference>
<dbReference type="PANTHER" id="PTHR16675">
    <property type="entry name" value="MHC CLASS I-RELATED"/>
    <property type="match status" value="1"/>
</dbReference>
<dbReference type="Pfam" id="PF07654">
    <property type="entry name" value="C1-set"/>
    <property type="match status" value="1"/>
</dbReference>
<dbReference type="Pfam" id="PF00129">
    <property type="entry name" value="MHC_I"/>
    <property type="match status" value="1"/>
</dbReference>
<dbReference type="SMART" id="SM00407">
    <property type="entry name" value="IGc1"/>
    <property type="match status" value="1"/>
</dbReference>
<dbReference type="SUPFAM" id="SSF48726">
    <property type="entry name" value="Immunoglobulin"/>
    <property type="match status" value="1"/>
</dbReference>
<dbReference type="SUPFAM" id="SSF54452">
    <property type="entry name" value="MHC antigen-recognition domain"/>
    <property type="match status" value="1"/>
</dbReference>
<dbReference type="PROSITE" id="PS50835">
    <property type="entry name" value="IG_LIKE"/>
    <property type="match status" value="1"/>
</dbReference>
<dbReference type="PROSITE" id="PS00290">
    <property type="entry name" value="IG_MHC"/>
    <property type="match status" value="1"/>
</dbReference>
<sequence length="366" mass="40169">MGMSQPGVLLSLLLVLLPQTWGAEPRLPLMYHLAAVSDLSTGLPSFWATGWLGAQQYLTYNNLRQEADPCGAWIWENQVSWYWEKETTDLKSKEQLFLEAIRTLENQINGTFTLQGLLGCELAPDNSSLPTAVFALNGEEFMRFNPRTGNWSGEWPETDIVGNLWMKQPEAARKESEFLLTSCPERLLGHLERGRQNLEWKEPPSMRLKARPGNSGSSVLTCAAFSFYPPELKFRFLRNGLASGSGNCSTGPNGDGSFHAWSLLEVKRGDEHHYQCQVEHEGLAQPLTVDLDSPARSSVPVVGIILGLLLVVVAIAGGVLLWNRMRSGLPAPWLSLSGDDSGDLLPGGNLPPEAEPQGVNAFPATS</sequence>
<accession>P13599</accession>
<comment type="function">
    <text evidence="1 5 7 8">Cell surface receptor that transfers passive humoral immunity from the mother to the newborn. Binds to the Fc region of monomeric immunoglobulin gamma and mediates its selective uptake from milk (PubMed:18818657, PubMed:7969498). IgG in the milk is bound at the apical surface of the intestinal epithelium. The resultant FcRn-IgG complexes are transcytosed across the intestinal epithelium and IgG is released from FcRn into blood or tissue fluids (PubMed:18818657, PubMed:7298722). Throughout life, contributes to effective humoral immunity by recycling IgG and extending its half-life in the circulation. Mechanistically, monomeric IgG binding to FcRn in acidic endosomes of endothelial and hematopoietic cells recycles IgG to the cell surface where it is released into the circulation. In addition of IgG, regulates homeostasis of the other most abundant circulating protein albumin/ALB (By similarity).</text>
</comment>
<comment type="subunit">
    <text evidence="1 6 8 9">FcRn complex consists of two subunits: p51, and p14 which is equivalent to beta-2-microglobulin. It forms an MHC class I-like heterodimer (PubMed:2911353, PubMed:7969498, PubMed:9493268). Interacts with albumin/ALB; this interaction regulates ALB homeostasis (By similarity).</text>
</comment>
<comment type="subcellular location">
    <subcellularLocation>
        <location evidence="6">Cell membrane</location>
        <topology evidence="2">Single-pass type I membrane protein</topology>
    </subcellularLocation>
    <subcellularLocation>
        <location evidence="1">Endosome membrane</location>
    </subcellularLocation>
</comment>
<comment type="tissue specificity">
    <text evidence="6">Intestinal epithelium.</text>
</comment>
<comment type="similarity">
    <text evidence="11">Belongs to the immunoglobulin superfamily.</text>
</comment>